<feature type="chain" id="PRO_0000086207" description="Ribosomal protein S6 kinase alpha-5">
    <location>
        <begin position="1"/>
        <end position="802"/>
    </location>
</feature>
<feature type="domain" description="Protein kinase 1" evidence="3">
    <location>
        <begin position="49"/>
        <end position="318"/>
    </location>
</feature>
<feature type="domain" description="AGC-kinase C-terminal" evidence="4">
    <location>
        <begin position="319"/>
        <end position="387"/>
    </location>
</feature>
<feature type="domain" description="Protein kinase 2" evidence="3">
    <location>
        <begin position="426"/>
        <end position="687"/>
    </location>
</feature>
<feature type="region of interest" description="Disordered" evidence="5">
    <location>
        <begin position="1"/>
        <end position="23"/>
    </location>
</feature>
<feature type="region of interest" description="Disordered" evidence="5">
    <location>
        <begin position="741"/>
        <end position="802"/>
    </location>
</feature>
<feature type="compositionally biased region" description="Gly residues" evidence="5">
    <location>
        <begin position="1"/>
        <end position="22"/>
    </location>
</feature>
<feature type="compositionally biased region" description="Low complexity" evidence="5">
    <location>
        <begin position="749"/>
        <end position="779"/>
    </location>
</feature>
<feature type="compositionally biased region" description="Polar residues" evidence="5">
    <location>
        <begin position="780"/>
        <end position="802"/>
    </location>
</feature>
<feature type="active site" description="Proton acceptor" evidence="1">
    <location>
        <position position="177"/>
    </location>
</feature>
<feature type="active site" description="Proton acceptor" evidence="1">
    <location>
        <position position="544"/>
    </location>
</feature>
<feature type="binding site" evidence="3">
    <location>
        <begin position="55"/>
        <end position="63"/>
    </location>
    <ligand>
        <name>ATP</name>
        <dbReference type="ChEBI" id="CHEBI:30616"/>
    </ligand>
</feature>
<feature type="binding site" evidence="3">
    <location>
        <position position="81"/>
    </location>
    <ligand>
        <name>ATP</name>
        <dbReference type="ChEBI" id="CHEBI:30616"/>
    </ligand>
</feature>
<feature type="binding site" evidence="3">
    <location>
        <begin position="432"/>
        <end position="440"/>
    </location>
    <ligand>
        <name>ATP</name>
        <dbReference type="ChEBI" id="CHEBI:30616"/>
    </ligand>
</feature>
<feature type="binding site" evidence="3">
    <location>
        <position position="455"/>
    </location>
    <ligand>
        <name>ATP</name>
        <dbReference type="ChEBI" id="CHEBI:30616"/>
    </ligand>
</feature>
<feature type="modified residue" description="Phosphoserine; by autocatalysis" evidence="12">
    <location>
        <position position="212"/>
    </location>
</feature>
<feature type="modified residue" description="Phosphoserine; by MAPK1, MAPK3 and MAPK14" evidence="12">
    <location>
        <position position="360"/>
    </location>
</feature>
<feature type="modified residue" description="Phosphoserine; by autocatalysis" evidence="12 25 26">
    <location>
        <position position="376"/>
    </location>
</feature>
<feature type="modified residue" description="Phosphoserine; by autocatalysis" evidence="12 26">
    <location>
        <position position="381"/>
    </location>
</feature>
<feature type="modified residue" description="Phosphothreonine; by MAPK1, MAPK3 and MAPK14" evidence="12">
    <location>
        <position position="581"/>
    </location>
</feature>
<feature type="modified residue" description="Phosphoserine" evidence="13">
    <location>
        <position position="647"/>
    </location>
</feature>
<feature type="modified residue" description="Phosphoserine" evidence="13">
    <location>
        <position position="657"/>
    </location>
</feature>
<feature type="modified residue" description="Phosphoserine" evidence="2">
    <location>
        <position position="691"/>
    </location>
</feature>
<feature type="modified residue" description="Phosphoserine" evidence="13">
    <location>
        <position position="695"/>
    </location>
</feature>
<feature type="modified residue" description="Phosphothreonine; by MAPK1, MAPK3 and MAPK14" evidence="13">
    <location>
        <position position="700"/>
    </location>
</feature>
<feature type="modified residue" description="Phosphoserine; by autocatalysis" evidence="12">
    <location>
        <position position="750"/>
    </location>
</feature>
<feature type="modified residue" description="Phosphoserine; by autocatalysis" evidence="12">
    <location>
        <position position="752"/>
    </location>
</feature>
<feature type="modified residue" description="Phosphoserine; by autocatalysis" evidence="12">
    <location>
        <position position="758"/>
    </location>
</feature>
<feature type="modified residue" description="Phosphoserine" evidence="2">
    <location>
        <position position="798"/>
    </location>
</feature>
<feature type="splice variant" id="VSP_057410" description="In isoform 3." evidence="20">
    <location>
        <begin position="1"/>
        <end position="79"/>
    </location>
</feature>
<feature type="splice variant" id="VSP_041837" description="In isoform 2." evidence="21">
    <original>N</original>
    <variation>V</variation>
    <location>
        <position position="549"/>
    </location>
</feature>
<feature type="splice variant" id="VSP_041838" description="In isoform 2." evidence="21">
    <location>
        <begin position="550"/>
        <end position="802"/>
    </location>
</feature>
<feature type="sequence variant" id="VAR_051634" description="In dbSNP:rs34699345.">
    <original>H</original>
    <variation>R</variation>
    <location>
        <position position="190"/>
    </location>
</feature>
<feature type="sequence variant" id="VAR_040634" description="In dbSNP:rs55911249." evidence="14">
    <original>D</original>
    <variation>N</variation>
    <location>
        <position position="554"/>
    </location>
</feature>
<feature type="sequence variant" id="VAR_040635" description="In dbSNP:rs34604933." evidence="14">
    <original>P</original>
    <variation>L</variation>
    <location>
        <position position="574"/>
    </location>
</feature>
<feature type="sequence variant" id="VAR_040636" description="In dbSNP:rs55968863." evidence="14">
    <original>Y</original>
    <variation>C</variation>
    <location>
        <position position="599"/>
    </location>
</feature>
<feature type="mutagenesis site" description="Loss of kinase activity." evidence="18">
    <original>D</original>
    <variation>A</variation>
    <location>
        <position position="195"/>
    </location>
</feature>
<feature type="mutagenesis site" description="Inactivates the N-terminal kinase domain." evidence="12">
    <original>S</original>
    <variation>A</variation>
    <location>
        <position position="212"/>
    </location>
</feature>
<feature type="mutagenesis site" description="Decreases kinase activity by 60% in response to PMA and UV-C." evidence="12">
    <original>S</original>
    <variation>A</variation>
    <location>
        <position position="360"/>
    </location>
</feature>
<feature type="mutagenesis site" description="Loss of kinase activity, and decreases the phosphorylation of S-360 and T-581." evidence="12">
    <original>S</original>
    <variation>A</variation>
    <location>
        <position position="376"/>
    </location>
</feature>
<feature type="mutagenesis site" description="Loss of kinase activity." evidence="18">
    <original>D</original>
    <variation>A</variation>
    <location>
        <position position="565"/>
    </location>
</feature>
<feature type="mutagenesis site" description="Loss of kinase activity, and blocks phosphorylation of S-212; S-376 and S-381 in response to PMA and UV-C." evidence="12">
    <original>T</original>
    <variation>A</variation>
    <location>
        <position position="581"/>
    </location>
</feature>
<feature type="mutagenesis site" description="Strongly reduces phosphorylation of T-581 in response to PMA and UV-C." evidence="13">
    <original>T</original>
    <variation>A</variation>
    <variation>D</variation>
    <location>
        <position position="700"/>
    </location>
</feature>
<feature type="sequence conflict" description="In Ref. 3; AAC69577." evidence="22" ref="3">
    <original>FA</original>
    <variation>LQ</variation>
    <location>
        <begin position="452"/>
        <end position="453"/>
    </location>
</feature>
<feature type="sequence conflict" description="In Ref. 3; AAC69577." evidence="22" ref="3">
    <original>V</original>
    <variation>L</variation>
    <location>
        <position position="532"/>
    </location>
</feature>
<feature type="sequence conflict" description="In Ref. 3; AAC69577." evidence="22" ref="3">
    <original>V</original>
    <variation>L</variation>
    <location>
        <position position="538"/>
    </location>
</feature>
<feature type="sequence conflict" description="In Ref. 3; AAC69577." evidence="22" ref="3">
    <original>SS</original>
    <variation>RG</variation>
    <location>
        <begin position="757"/>
        <end position="758"/>
    </location>
</feature>
<feature type="strand" evidence="27">
    <location>
        <begin position="26"/>
        <end position="31"/>
    </location>
</feature>
<feature type="helix" evidence="27">
    <location>
        <begin position="46"/>
        <end position="48"/>
    </location>
</feature>
<feature type="strand" evidence="27">
    <location>
        <begin position="49"/>
        <end position="57"/>
    </location>
</feature>
<feature type="turn" evidence="27">
    <location>
        <begin position="58"/>
        <end position="60"/>
    </location>
</feature>
<feature type="strand" evidence="27">
    <location>
        <begin position="61"/>
        <end position="68"/>
    </location>
</feature>
<feature type="turn" evidence="27">
    <location>
        <begin position="72"/>
        <end position="75"/>
    </location>
</feature>
<feature type="strand" evidence="27">
    <location>
        <begin position="77"/>
        <end position="94"/>
    </location>
</feature>
<feature type="helix" evidence="27">
    <location>
        <begin position="95"/>
        <end position="97"/>
    </location>
</feature>
<feature type="helix" evidence="27">
    <location>
        <begin position="101"/>
        <end position="109"/>
    </location>
</feature>
<feature type="strand" evidence="27">
    <location>
        <begin position="117"/>
        <end position="123"/>
    </location>
</feature>
<feature type="strand" evidence="27">
    <location>
        <begin position="126"/>
        <end position="131"/>
    </location>
</feature>
<feature type="helix" evidence="27">
    <location>
        <begin position="139"/>
        <end position="146"/>
    </location>
</feature>
<feature type="helix" evidence="27">
    <location>
        <begin position="151"/>
        <end position="170"/>
    </location>
</feature>
<feature type="helix" evidence="27">
    <location>
        <begin position="180"/>
        <end position="182"/>
    </location>
</feature>
<feature type="strand" evidence="27">
    <location>
        <begin position="183"/>
        <end position="185"/>
    </location>
</feature>
<feature type="strand" evidence="27">
    <location>
        <begin position="191"/>
        <end position="194"/>
    </location>
</feature>
<feature type="strand" evidence="27">
    <location>
        <begin position="196"/>
        <end position="201"/>
    </location>
</feature>
<feature type="helix" evidence="27">
    <location>
        <begin position="204"/>
        <end position="210"/>
    </location>
</feature>
<feature type="helix" evidence="27">
    <location>
        <begin position="212"/>
        <end position="214"/>
    </location>
</feature>
<feature type="helix" evidence="27">
    <location>
        <begin position="222"/>
        <end position="225"/>
    </location>
</feature>
<feature type="helix" evidence="27">
    <location>
        <begin position="235"/>
        <end position="250"/>
    </location>
</feature>
<feature type="helix" evidence="27">
    <location>
        <begin position="264"/>
        <end position="273"/>
    </location>
</feature>
<feature type="helix" evidence="27">
    <location>
        <begin position="284"/>
        <end position="293"/>
    </location>
</feature>
<feature type="helix" evidence="27">
    <location>
        <begin position="298"/>
        <end position="300"/>
    </location>
</feature>
<feature type="turn" evidence="27">
    <location>
        <begin position="306"/>
        <end position="308"/>
    </location>
</feature>
<feature type="helix" evidence="27">
    <location>
        <begin position="309"/>
        <end position="313"/>
    </location>
</feature>
<feature type="helix" evidence="27">
    <location>
        <begin position="316"/>
        <end position="318"/>
    </location>
</feature>
<feature type="helix" evidence="27">
    <location>
        <begin position="323"/>
        <end position="327"/>
    </location>
</feature>
<feature type="helix" evidence="28">
    <location>
        <begin position="418"/>
        <end position="422"/>
    </location>
</feature>
<feature type="strand" evidence="28">
    <location>
        <begin position="423"/>
        <end position="425"/>
    </location>
</feature>
<feature type="strand" evidence="29">
    <location>
        <begin position="427"/>
        <end position="429"/>
    </location>
</feature>
<feature type="strand" evidence="28">
    <location>
        <begin position="432"/>
        <end position="435"/>
    </location>
</feature>
<feature type="strand" evidence="28">
    <location>
        <begin position="438"/>
        <end position="445"/>
    </location>
</feature>
<feature type="turn" evidence="28">
    <location>
        <begin position="446"/>
        <end position="448"/>
    </location>
</feature>
<feature type="strand" evidence="28">
    <location>
        <begin position="451"/>
        <end position="458"/>
    </location>
</feature>
<feature type="helix" evidence="28">
    <location>
        <begin position="459"/>
        <end position="461"/>
    </location>
</feature>
<feature type="helix" evidence="28">
    <location>
        <begin position="462"/>
        <end position="474"/>
    </location>
</feature>
<feature type="turn" evidence="28">
    <location>
        <begin position="475"/>
        <end position="477"/>
    </location>
</feature>
<feature type="strand" evidence="28">
    <location>
        <begin position="484"/>
        <end position="489"/>
    </location>
</feature>
<feature type="strand" evidence="28">
    <location>
        <begin position="491"/>
        <end position="498"/>
    </location>
</feature>
<feature type="strand" evidence="30">
    <location>
        <begin position="503"/>
        <end position="505"/>
    </location>
</feature>
<feature type="helix" evidence="28">
    <location>
        <begin position="506"/>
        <end position="512"/>
    </location>
</feature>
<feature type="helix" evidence="28">
    <location>
        <begin position="518"/>
        <end position="537"/>
    </location>
</feature>
<feature type="helix" evidence="28">
    <location>
        <begin position="547"/>
        <end position="549"/>
    </location>
</feature>
<feature type="strand" evidence="28">
    <location>
        <begin position="550"/>
        <end position="553"/>
    </location>
</feature>
<feature type="strand" evidence="28">
    <location>
        <begin position="560"/>
        <end position="563"/>
    </location>
</feature>
<feature type="strand" evidence="30">
    <location>
        <begin position="570"/>
        <end position="572"/>
    </location>
</feature>
<feature type="helix" evidence="28">
    <location>
        <begin position="602"/>
        <end position="617"/>
    </location>
</feature>
<feature type="strand" evidence="29">
    <location>
        <begin position="627"/>
        <end position="629"/>
    </location>
</feature>
<feature type="helix" evidence="28">
    <location>
        <begin position="634"/>
        <end position="641"/>
    </location>
</feature>
<feature type="turn" evidence="28">
    <location>
        <begin position="642"/>
        <end position="644"/>
    </location>
</feature>
<feature type="helix" evidence="28">
    <location>
        <begin position="651"/>
        <end position="654"/>
    </location>
</feature>
<feature type="helix" evidence="28">
    <location>
        <begin position="658"/>
        <end position="668"/>
    </location>
</feature>
<feature type="turn" evidence="28">
    <location>
        <begin position="672"/>
        <end position="674"/>
    </location>
</feature>
<feature type="turn" evidence="28">
    <location>
        <begin position="678"/>
        <end position="680"/>
    </location>
</feature>
<feature type="helix" evidence="28">
    <location>
        <begin position="685"/>
        <end position="687"/>
    </location>
</feature>
<feature type="strand" evidence="29">
    <location>
        <begin position="688"/>
        <end position="690"/>
    </location>
</feature>
<feature type="helix" evidence="28">
    <location>
        <begin position="700"/>
        <end position="728"/>
    </location>
</feature>
<keyword id="KW-0002">3D-structure</keyword>
<keyword id="KW-0025">Alternative splicing</keyword>
<keyword id="KW-0067">ATP-binding</keyword>
<keyword id="KW-0963">Cytoplasm</keyword>
<keyword id="KW-0395">Inflammatory response</keyword>
<keyword id="KW-0418">Kinase</keyword>
<keyword id="KW-0460">Magnesium</keyword>
<keyword id="KW-0479">Metal-binding</keyword>
<keyword id="KW-0547">Nucleotide-binding</keyword>
<keyword id="KW-0539">Nucleus</keyword>
<keyword id="KW-0597">Phosphoprotein</keyword>
<keyword id="KW-1267">Proteomics identification</keyword>
<keyword id="KW-1185">Reference proteome</keyword>
<keyword id="KW-0677">Repeat</keyword>
<keyword id="KW-0723">Serine/threonine-protein kinase</keyword>
<keyword id="KW-0346">Stress response</keyword>
<keyword id="KW-0808">Transferase</keyword>
<keyword id="KW-0832">Ubl conjugation</keyword>
<reference evidence="22" key="1">
    <citation type="journal article" date="1998" name="EMBO J.">
        <title>Mitogen- and stress-activated protein kinase-1 (MSK1) is directly activated by MAPK and SAPK2/p38, and may mediate activation of CREB.</title>
        <authorList>
            <person name="Deak M."/>
            <person name="Clifton A.D."/>
            <person name="Lucocq J.M."/>
            <person name="Alessi D.R."/>
        </authorList>
    </citation>
    <scope>NUCLEOTIDE SEQUENCE [MRNA] (ISOFORM 1)</scope>
    <scope>FUNCTION</scope>
    <scope>ACTIVITY REGULATION</scope>
    <scope>SUBCELLULAR LOCATION</scope>
    <scope>TISSUE SPECIFICITY</scope>
    <scope>MUTAGENESIS OF ASP-195 AND ASP-565</scope>
    <source>
        <tissue evidence="18">Pancreas</tissue>
    </source>
</reference>
<reference evidence="22" key="2">
    <citation type="journal article" date="1999" name="J. Biol. Chem.">
        <title>Cloning and characterization of RLPK, a novel RSK-related protein kinase.</title>
        <authorList>
            <person name="New L."/>
            <person name="Zhao M."/>
            <person name="Li Y."/>
            <person name="Bassett W.W."/>
            <person name="Feng Y."/>
            <person name="Ludwig S."/>
            <person name="Padova F.D."/>
            <person name="Gram H."/>
            <person name="Han J."/>
        </authorList>
    </citation>
    <scope>NUCLEOTIDE SEQUENCE [MRNA] (ISOFORM 1)</scope>
    <scope>FUNCTION</scope>
    <scope>TISSUE SPECIFICITY</scope>
    <source>
        <tissue evidence="19">Placenta</tissue>
    </source>
</reference>
<reference evidence="22" key="3">
    <citation type="journal article" date="1999" name="Cytogenet. Cell Genet.">
        <title>Assignment of a member of the ribosomal protein S6 kinase family, RPS6KA5, to human chromosome 14q31-q32.1 by radiation hybrid mapping.</title>
        <authorList>
            <person name="Jiang C."/>
            <person name="Yu L."/>
            <person name="Tu Q."/>
            <person name="Zhao Y."/>
            <person name="Zhang H."/>
            <person name="Zhao S."/>
        </authorList>
    </citation>
    <scope>NUCLEOTIDE SEQUENCE [MRNA] (ISOFORM 1)</scope>
    <scope>CHROMOSOMAL LOCATION</scope>
</reference>
<reference key="4">
    <citation type="journal article" date="2004" name="Nat. Genet.">
        <title>Complete sequencing and characterization of 21,243 full-length human cDNAs.</title>
        <authorList>
            <person name="Ota T."/>
            <person name="Suzuki Y."/>
            <person name="Nishikawa T."/>
            <person name="Otsuki T."/>
            <person name="Sugiyama T."/>
            <person name="Irie R."/>
            <person name="Wakamatsu A."/>
            <person name="Hayashi K."/>
            <person name="Sato H."/>
            <person name="Nagai K."/>
            <person name="Kimura K."/>
            <person name="Makita H."/>
            <person name="Sekine M."/>
            <person name="Obayashi M."/>
            <person name="Nishi T."/>
            <person name="Shibahara T."/>
            <person name="Tanaka T."/>
            <person name="Ishii S."/>
            <person name="Yamamoto J."/>
            <person name="Saito K."/>
            <person name="Kawai Y."/>
            <person name="Isono Y."/>
            <person name="Nakamura Y."/>
            <person name="Nagahari K."/>
            <person name="Murakami K."/>
            <person name="Yasuda T."/>
            <person name="Iwayanagi T."/>
            <person name="Wagatsuma M."/>
            <person name="Shiratori A."/>
            <person name="Sudo H."/>
            <person name="Hosoiri T."/>
            <person name="Kaku Y."/>
            <person name="Kodaira H."/>
            <person name="Kondo H."/>
            <person name="Sugawara M."/>
            <person name="Takahashi M."/>
            <person name="Kanda K."/>
            <person name="Yokoi T."/>
            <person name="Furuya T."/>
            <person name="Kikkawa E."/>
            <person name="Omura Y."/>
            <person name="Abe K."/>
            <person name="Kamihara K."/>
            <person name="Katsuta N."/>
            <person name="Sato K."/>
            <person name="Tanikawa M."/>
            <person name="Yamazaki M."/>
            <person name="Ninomiya K."/>
            <person name="Ishibashi T."/>
            <person name="Yamashita H."/>
            <person name="Murakawa K."/>
            <person name="Fujimori K."/>
            <person name="Tanai H."/>
            <person name="Kimata M."/>
            <person name="Watanabe M."/>
            <person name="Hiraoka S."/>
            <person name="Chiba Y."/>
            <person name="Ishida S."/>
            <person name="Ono Y."/>
            <person name="Takiguchi S."/>
            <person name="Watanabe S."/>
            <person name="Yosida M."/>
            <person name="Hotuta T."/>
            <person name="Kusano J."/>
            <person name="Kanehori K."/>
            <person name="Takahashi-Fujii A."/>
            <person name="Hara H."/>
            <person name="Tanase T.-O."/>
            <person name="Nomura Y."/>
            <person name="Togiya S."/>
            <person name="Komai F."/>
            <person name="Hara R."/>
            <person name="Takeuchi K."/>
            <person name="Arita M."/>
            <person name="Imose N."/>
            <person name="Musashino K."/>
            <person name="Yuuki H."/>
            <person name="Oshima A."/>
            <person name="Sasaki N."/>
            <person name="Aotsuka S."/>
            <person name="Yoshikawa Y."/>
            <person name="Matsunawa H."/>
            <person name="Ichihara T."/>
            <person name="Shiohata N."/>
            <person name="Sano S."/>
            <person name="Moriya S."/>
            <person name="Momiyama H."/>
            <person name="Satoh N."/>
            <person name="Takami S."/>
            <person name="Terashima Y."/>
            <person name="Suzuki O."/>
            <person name="Nakagawa S."/>
            <person name="Senoh A."/>
            <person name="Mizoguchi H."/>
            <person name="Goto Y."/>
            <person name="Shimizu F."/>
            <person name="Wakebe H."/>
            <person name="Hishigaki H."/>
            <person name="Watanabe T."/>
            <person name="Sugiyama A."/>
            <person name="Takemoto M."/>
            <person name="Kawakami B."/>
            <person name="Yamazaki M."/>
            <person name="Watanabe K."/>
            <person name="Kumagai A."/>
            <person name="Itakura S."/>
            <person name="Fukuzumi Y."/>
            <person name="Fujimori Y."/>
            <person name="Komiyama M."/>
            <person name="Tashiro H."/>
            <person name="Tanigami A."/>
            <person name="Fujiwara T."/>
            <person name="Ono T."/>
            <person name="Yamada K."/>
            <person name="Fujii Y."/>
            <person name="Ozaki K."/>
            <person name="Hirao M."/>
            <person name="Ohmori Y."/>
            <person name="Kawabata A."/>
            <person name="Hikiji T."/>
            <person name="Kobatake N."/>
            <person name="Inagaki H."/>
            <person name="Ikema Y."/>
            <person name="Okamoto S."/>
            <person name="Okitani R."/>
            <person name="Kawakami T."/>
            <person name="Noguchi S."/>
            <person name="Itoh T."/>
            <person name="Shigeta K."/>
            <person name="Senba T."/>
            <person name="Matsumura K."/>
            <person name="Nakajima Y."/>
            <person name="Mizuno T."/>
            <person name="Morinaga M."/>
            <person name="Sasaki M."/>
            <person name="Togashi T."/>
            <person name="Oyama M."/>
            <person name="Hata H."/>
            <person name="Watanabe M."/>
            <person name="Komatsu T."/>
            <person name="Mizushima-Sugano J."/>
            <person name="Satoh T."/>
            <person name="Shirai Y."/>
            <person name="Takahashi Y."/>
            <person name="Nakagawa K."/>
            <person name="Okumura K."/>
            <person name="Nagase T."/>
            <person name="Nomura N."/>
            <person name="Kikuchi H."/>
            <person name="Masuho Y."/>
            <person name="Yamashita R."/>
            <person name="Nakai K."/>
            <person name="Yada T."/>
            <person name="Nakamura Y."/>
            <person name="Ohara O."/>
            <person name="Isogai T."/>
            <person name="Sugano S."/>
        </authorList>
    </citation>
    <scope>NUCLEOTIDE SEQUENCE [LARGE SCALE MRNA] (ISOFORM 3)</scope>
    <source>
        <tissue>Caudate nucleus</tissue>
    </source>
</reference>
<reference key="5">
    <citation type="journal article" date="2003" name="Nature">
        <title>The DNA sequence and analysis of human chromosome 14.</title>
        <authorList>
            <person name="Heilig R."/>
            <person name="Eckenberg R."/>
            <person name="Petit J.-L."/>
            <person name="Fonknechten N."/>
            <person name="Da Silva C."/>
            <person name="Cattolico L."/>
            <person name="Levy M."/>
            <person name="Barbe V."/>
            <person name="De Berardinis V."/>
            <person name="Ureta-Vidal A."/>
            <person name="Pelletier E."/>
            <person name="Vico V."/>
            <person name="Anthouard V."/>
            <person name="Rowen L."/>
            <person name="Madan A."/>
            <person name="Qin S."/>
            <person name="Sun H."/>
            <person name="Du H."/>
            <person name="Pepin K."/>
            <person name="Artiguenave F."/>
            <person name="Robert C."/>
            <person name="Cruaud C."/>
            <person name="Bruels T."/>
            <person name="Jaillon O."/>
            <person name="Friedlander L."/>
            <person name="Samson G."/>
            <person name="Brottier P."/>
            <person name="Cure S."/>
            <person name="Segurens B."/>
            <person name="Aniere F."/>
            <person name="Samain S."/>
            <person name="Crespeau H."/>
            <person name="Abbasi N."/>
            <person name="Aiach N."/>
            <person name="Boscus D."/>
            <person name="Dickhoff R."/>
            <person name="Dors M."/>
            <person name="Dubois I."/>
            <person name="Friedman C."/>
            <person name="Gouyvenoux M."/>
            <person name="James R."/>
            <person name="Madan A."/>
            <person name="Mairey-Estrada B."/>
            <person name="Mangenot S."/>
            <person name="Martins N."/>
            <person name="Menard M."/>
            <person name="Oztas S."/>
            <person name="Ratcliffe A."/>
            <person name="Shaffer T."/>
            <person name="Trask B."/>
            <person name="Vacherie B."/>
            <person name="Bellemere C."/>
            <person name="Belser C."/>
            <person name="Besnard-Gonnet M."/>
            <person name="Bartol-Mavel D."/>
            <person name="Boutard M."/>
            <person name="Briez-Silla S."/>
            <person name="Combette S."/>
            <person name="Dufosse-Laurent V."/>
            <person name="Ferron C."/>
            <person name="Lechaplais C."/>
            <person name="Louesse C."/>
            <person name="Muselet D."/>
            <person name="Magdelenat G."/>
            <person name="Pateau E."/>
            <person name="Petit E."/>
            <person name="Sirvain-Trukniewicz P."/>
            <person name="Trybou A."/>
            <person name="Vega-Czarny N."/>
            <person name="Bataille E."/>
            <person name="Bluet E."/>
            <person name="Bordelais I."/>
            <person name="Dubois M."/>
            <person name="Dumont C."/>
            <person name="Guerin T."/>
            <person name="Haffray S."/>
            <person name="Hammadi R."/>
            <person name="Muanga J."/>
            <person name="Pellouin V."/>
            <person name="Robert D."/>
            <person name="Wunderle E."/>
            <person name="Gauguet G."/>
            <person name="Roy A."/>
            <person name="Sainte-Marthe L."/>
            <person name="Verdier J."/>
            <person name="Verdier-Discala C."/>
            <person name="Hillier L.W."/>
            <person name="Fulton L."/>
            <person name="McPherson J."/>
            <person name="Matsuda F."/>
            <person name="Wilson R."/>
            <person name="Scarpelli C."/>
            <person name="Gyapay G."/>
            <person name="Wincker P."/>
            <person name="Saurin W."/>
            <person name="Quetier F."/>
            <person name="Waterston R."/>
            <person name="Hood L."/>
            <person name="Weissenbach J."/>
        </authorList>
    </citation>
    <scope>NUCLEOTIDE SEQUENCE [LARGE SCALE GENOMIC DNA]</scope>
</reference>
<reference key="6">
    <citation type="journal article" date="2004" name="Genome Res.">
        <title>The status, quality, and expansion of the NIH full-length cDNA project: the Mammalian Gene Collection (MGC).</title>
        <authorList>
            <consortium name="The MGC Project Team"/>
        </authorList>
    </citation>
    <scope>NUCLEOTIDE SEQUENCE [LARGE SCALE MRNA] (ISOFORM 2)</scope>
    <source>
        <tissue evidence="24">Placenta</tissue>
    </source>
</reference>
<reference key="7">
    <citation type="journal article" date="2002" name="Mol. Cell. Biol.">
        <title>MSK1 and MSK2 are required for the mitogen- and stress-induced phosphorylation of CREB and ATF1 in fibroblasts.</title>
        <authorList>
            <person name="Wiggin G.R."/>
            <person name="Soloaga A."/>
            <person name="Foster J.M."/>
            <person name="Murray-Tait V."/>
            <person name="Cohen P."/>
            <person name="Arthur J.S."/>
        </authorList>
    </citation>
    <scope>FUNCTION</scope>
</reference>
<reference key="8">
    <citation type="journal article" date="2003" name="EMBO J.">
        <title>Transcriptional activation of the NF-kappaB p65 subunit by mitogen- and stress-activated protein kinase-1 (MSK1).</title>
        <authorList>
            <person name="Vermeulen L."/>
            <person name="De Wilde G."/>
            <person name="Van Damme P."/>
            <person name="Vanden Berghe W."/>
            <person name="Haegeman G."/>
        </authorList>
    </citation>
    <scope>FUNCTION</scope>
    <scope>INTERACTION WITH RELA</scope>
</reference>
<reference key="9">
    <citation type="journal article" date="2003" name="EMBO J.">
        <title>MSK2 and MSK1 mediate the mitogen- and stress-induced phosphorylation of histone H3 and HMG-14.</title>
        <authorList>
            <person name="Soloaga A."/>
            <person name="Thomson S."/>
            <person name="Wiggin G.R."/>
            <person name="Rampersaud N."/>
            <person name="Dyson M.H."/>
            <person name="Hazzalin C.A."/>
            <person name="Mahadevan L.C."/>
            <person name="Arthur J.S."/>
        </authorList>
    </citation>
    <scope>FUNCTION IN PHOSPHORYLATION OF HISTONE H3 AND HMGN1/HMG14</scope>
</reference>
<reference key="10">
    <citation type="journal article" date="2003" name="Exp. Hematol.">
        <title>Erythropoietin-induced serine 727 phosphorylation of STAT3 in erythroid cells is mediated by a MEK-, ERK-, and MSK1-dependent pathway.</title>
        <authorList>
            <person name="Wierenga A.T."/>
            <person name="Vogelzang I."/>
            <person name="Eggen B.J."/>
            <person name="Vellenga E."/>
        </authorList>
    </citation>
    <scope>FUNCTION IN PHOSPHORYLATION OF STAT3</scope>
</reference>
<reference key="11">
    <citation type="journal article" date="2003" name="Oncogene">
        <title>Regulation of the ER81 transcription factor and its coactivators by mitogen- and stress-activated protein kinase 1 (MSK1).</title>
        <authorList>
            <person name="Janknecht R."/>
        </authorList>
    </citation>
    <scope>FUNCTION IN PHOSPHORYLATION OF ETV1/ER81</scope>
    <scope>INTERACTION WITH CREBBP AND EP300</scope>
</reference>
<reference key="12">
    <citation type="journal article" date="2004" name="J. Biol. Chem.">
        <title>Phosphorylation of histone H2A inhibits transcription on chromatin templates.</title>
        <authorList>
            <person name="Zhang Y."/>
            <person name="Griffin K."/>
            <person name="Mondal N."/>
            <person name="Parvin J.D."/>
        </authorList>
    </citation>
    <scope>FUNCTION IN PHOSPHORYLATION OF HISTONE H2A</scope>
</reference>
<reference key="13">
    <citation type="journal article" date="2005" name="Biochem. J.">
        <title>MSK1 activity is controlled by multiple phosphorylation sites.</title>
        <authorList>
            <person name="McCoy C.E."/>
            <person name="Campbell D.G."/>
            <person name="Deak M."/>
            <person name="Bloomberg G.B."/>
            <person name="Arthur J.S.C."/>
        </authorList>
    </citation>
    <scope>ACTIVITY REGULATION</scope>
    <scope>PHOSPHORYLATION AT SER-212; SER-360; SER-376; SER-381; THR-581; SER-750; SER-752 AND SER-758</scope>
    <scope>MUTAGENESIS OF SER-212; SER-360; SER-376 AND THR-581</scope>
</reference>
<reference key="14">
    <citation type="journal article" date="2007" name="Biochem. J.">
        <title>Identification of novel phosphorylation sites in MSK1 by precursor ion scanning MS.</title>
        <authorList>
            <person name="McCoy C.E."/>
            <person name="Macdonald A."/>
            <person name="Morrice N.A."/>
            <person name="Campbell D.G."/>
            <person name="Deak M."/>
            <person name="Toth R."/>
            <person name="McIlrath J."/>
            <person name="Arthur J.S."/>
        </authorList>
    </citation>
    <scope>PHOSPHORYLATION AT SER-647; SER-657; SER-695 AND THR-700</scope>
    <scope>MUTAGENESIS OF THR-700</scope>
</reference>
<reference key="15">
    <citation type="journal article" date="2008" name="EMBO J.">
        <title>Altered subcellular distribution of MSK1 induced by glucocorticoids contributes to NF-kappaB inhibition.</title>
        <authorList>
            <person name="Beck I.M."/>
            <person name="Vanden Berghe W."/>
            <person name="Vermeulen L."/>
            <person name="Bougarne N."/>
            <person name="Vander Cruyssen B."/>
            <person name="Haegeman G."/>
            <person name="De Bosscher K."/>
        </authorList>
    </citation>
    <scope>FUNCTION</scope>
    <scope>SUBCELLULAR LOCATION</scope>
</reference>
<reference key="16">
    <citation type="journal article" date="2008" name="Front. Biosci.">
        <title>MSK activation and physiological roles.</title>
        <authorList>
            <person name="Arthur J.S."/>
        </authorList>
    </citation>
    <scope>REVIEW ON FUNCTION</scope>
</reference>
<reference key="17">
    <citation type="journal article" date="2009" name="Sci. Signal.">
        <title>Quantitative phosphoproteomic analysis of T cell receptor signaling reveals system-wide modulation of protein-protein interactions.</title>
        <authorList>
            <person name="Mayya V."/>
            <person name="Lundgren D.H."/>
            <person name="Hwang S.-I."/>
            <person name="Rezaul K."/>
            <person name="Wu L."/>
            <person name="Eng J.K."/>
            <person name="Rodionov V."/>
            <person name="Han D.K."/>
        </authorList>
    </citation>
    <scope>PHOSPHORYLATION [LARGE SCALE ANALYSIS] AT SER-376</scope>
    <scope>IDENTIFICATION BY MASS SPECTROMETRY [LARGE SCALE ANALYSIS]</scope>
    <source>
        <tissue>Leukemic T-cell</tissue>
    </source>
</reference>
<reference key="18">
    <citation type="journal article" date="2009" name="Trends Biochem. Sci.">
        <title>The versatile role of MSKs in transcriptional regulation.</title>
        <authorList>
            <person name="Vermeulen L."/>
            <person name="Vanden Berghe W."/>
            <person name="Beck I.M."/>
            <person name="De Bosscher K."/>
            <person name="Haegeman G."/>
        </authorList>
    </citation>
    <scope>REVIEW ON FUNCTION</scope>
</reference>
<reference key="19">
    <citation type="journal article" date="2010" name="PLoS ONE">
        <title>Development and validation of a method for profiling post-translational modification activities using protein microarrays.</title>
        <authorList>
            <person name="Del Rincon S.V."/>
            <person name="Rogers J."/>
            <person name="Widschwendter M."/>
            <person name="Sun D."/>
            <person name="Sieburg H.B."/>
            <person name="Spruck C."/>
        </authorList>
    </citation>
    <scope>UBIQUITINATION</scope>
</reference>
<reference key="20">
    <citation type="journal article" date="2010" name="Sci. Signal.">
        <title>Quantitative phosphoproteomics reveals widespread full phosphorylation site occupancy during mitosis.</title>
        <authorList>
            <person name="Olsen J.V."/>
            <person name="Vermeulen M."/>
            <person name="Santamaria A."/>
            <person name="Kumar C."/>
            <person name="Miller M.L."/>
            <person name="Jensen L.J."/>
            <person name="Gnad F."/>
            <person name="Cox J."/>
            <person name="Jensen T.S."/>
            <person name="Nigg E.A."/>
            <person name="Brunak S."/>
            <person name="Mann M."/>
        </authorList>
    </citation>
    <scope>PHOSPHORYLATION [LARGE SCALE ANALYSIS] AT SER-376 AND SER-381</scope>
    <scope>IDENTIFICATION BY MASS SPECTROMETRY [LARGE SCALE ANALYSIS]</scope>
    <source>
        <tissue>Cervix carcinoma</tissue>
    </source>
</reference>
<reference key="21">
    <citation type="journal article" date="2011" name="BMC Syst. Biol.">
        <title>Initial characterization of the human central proteome.</title>
        <authorList>
            <person name="Burkard T.R."/>
            <person name="Planyavsky M."/>
            <person name="Kaupe I."/>
            <person name="Breitwieser F.P."/>
            <person name="Buerckstuemmer T."/>
            <person name="Bennett K.L."/>
            <person name="Superti-Furga G."/>
            <person name="Colinge J."/>
        </authorList>
    </citation>
    <scope>IDENTIFICATION BY MASS SPECTROMETRY [LARGE SCALE ANALYSIS]</scope>
</reference>
<reference key="22">
    <citation type="journal article" date="2015" name="Nat. Commun.">
        <title>The E3 ubiquitin ligase Trim7 mediates c-Jun/AP-1 activation by Ras signalling.</title>
        <authorList>
            <person name="Chakraborty A."/>
            <person name="Diefenbacher M.E."/>
            <person name="Mylona A."/>
            <person name="Kassel O."/>
            <person name="Behrens A."/>
        </authorList>
    </citation>
    <scope>FUNCTION IN PHOSPHORYLATION OF TRIM7</scope>
</reference>
<reference key="23">
    <citation type="journal article" date="2004" name="Structure">
        <title>The structure of MSK1 reveals a novel autoinhibitory conformation for a dual kinase protein.</title>
        <authorList>
            <person name="Smith K.J."/>
            <person name="Carter P.S."/>
            <person name="Bridges A."/>
            <person name="Horrocks P."/>
            <person name="Lewis C."/>
            <person name="Pettman G."/>
            <person name="Clarke A."/>
            <person name="Brown M."/>
            <person name="Hughes J."/>
            <person name="Wilkinson M."/>
            <person name="Bax B."/>
            <person name="Reith A."/>
        </authorList>
    </citation>
    <scope>X-RAY CRYSTALLOGRAPHY (1.80 ANGSTROMS) OF 2-348</scope>
</reference>
<reference key="24">
    <citation type="journal article" date="2010" name="J. Mol. Biol.">
        <title>The crystal structure of the active form of the C-terminal kinase domain of mitogen- and stress-activated protein kinase 1.</title>
        <authorList>
            <person name="Malakhova M."/>
            <person name="D'Angelo I."/>
            <person name="Kim H.G."/>
            <person name="Kurinov I."/>
            <person name="Bode A.M."/>
            <person name="Dong Z."/>
        </authorList>
    </citation>
    <scope>X-RAY CRYSTALLOGRAPHY (2.00 ANGSTROMS) OF 414-738</scope>
</reference>
<reference key="25">
    <citation type="journal article" date="2007" name="Nature">
        <title>Patterns of somatic mutation in human cancer genomes.</title>
        <authorList>
            <person name="Greenman C."/>
            <person name="Stephens P."/>
            <person name="Smith R."/>
            <person name="Dalgliesh G.L."/>
            <person name="Hunter C."/>
            <person name="Bignell G."/>
            <person name="Davies H."/>
            <person name="Teague J."/>
            <person name="Butler A."/>
            <person name="Stevens C."/>
            <person name="Edkins S."/>
            <person name="O'Meara S."/>
            <person name="Vastrik I."/>
            <person name="Schmidt E.E."/>
            <person name="Avis T."/>
            <person name="Barthorpe S."/>
            <person name="Bhamra G."/>
            <person name="Buck G."/>
            <person name="Choudhury B."/>
            <person name="Clements J."/>
            <person name="Cole J."/>
            <person name="Dicks E."/>
            <person name="Forbes S."/>
            <person name="Gray K."/>
            <person name="Halliday K."/>
            <person name="Harrison R."/>
            <person name="Hills K."/>
            <person name="Hinton J."/>
            <person name="Jenkinson A."/>
            <person name="Jones D."/>
            <person name="Menzies A."/>
            <person name="Mironenko T."/>
            <person name="Perry J."/>
            <person name="Raine K."/>
            <person name="Richardson D."/>
            <person name="Shepherd R."/>
            <person name="Small A."/>
            <person name="Tofts C."/>
            <person name="Varian J."/>
            <person name="Webb T."/>
            <person name="West S."/>
            <person name="Widaa S."/>
            <person name="Yates A."/>
            <person name="Cahill D.P."/>
            <person name="Louis D.N."/>
            <person name="Goldstraw P."/>
            <person name="Nicholson A.G."/>
            <person name="Brasseur F."/>
            <person name="Looijenga L."/>
            <person name="Weber B.L."/>
            <person name="Chiew Y.-E."/>
            <person name="DeFazio A."/>
            <person name="Greaves M.F."/>
            <person name="Green A.R."/>
            <person name="Campbell P."/>
            <person name="Birney E."/>
            <person name="Easton D.F."/>
            <person name="Chenevix-Trench G."/>
            <person name="Tan M.-H."/>
            <person name="Khoo S.K."/>
            <person name="Teh B.T."/>
            <person name="Yuen S.T."/>
            <person name="Leung S.Y."/>
            <person name="Wooster R."/>
            <person name="Futreal P.A."/>
            <person name="Stratton M.R."/>
        </authorList>
    </citation>
    <scope>VARIANTS [LARGE SCALE ANALYSIS] ASN-554; LEU-574 AND CYS-599</scope>
</reference>
<accession>O75582</accession>
<accession>B7Z2Y5</accession>
<accession>O95316</accession>
<accession>Q96AF7</accession>
<gene>
    <name type="primary">RPS6KA5</name>
    <name type="synonym">MSK1</name>
</gene>
<protein>
    <recommendedName>
        <fullName>Ribosomal protein S6 kinase alpha-5</fullName>
        <shortName>S6K-alpha-5</shortName>
        <ecNumber>2.7.11.1</ecNumber>
    </recommendedName>
    <alternativeName>
        <fullName>90 kDa ribosomal protein S6 kinase 5</fullName>
    </alternativeName>
    <alternativeName>
        <fullName>Nuclear mitogen- and stress-activated protein kinase 1</fullName>
    </alternativeName>
    <alternativeName>
        <fullName>RSK-like protein kinase</fullName>
        <shortName>RSKL</shortName>
    </alternativeName>
</protein>
<organism evidence="23">
    <name type="scientific">Homo sapiens</name>
    <name type="common">Human</name>
    <dbReference type="NCBI Taxonomy" id="9606"/>
    <lineage>
        <taxon>Eukaryota</taxon>
        <taxon>Metazoa</taxon>
        <taxon>Chordata</taxon>
        <taxon>Craniata</taxon>
        <taxon>Vertebrata</taxon>
        <taxon>Euteleostomi</taxon>
        <taxon>Mammalia</taxon>
        <taxon>Eutheria</taxon>
        <taxon>Euarchontoglires</taxon>
        <taxon>Primates</taxon>
        <taxon>Haplorrhini</taxon>
        <taxon>Catarrhini</taxon>
        <taxon>Hominidae</taxon>
        <taxon>Homo</taxon>
    </lineage>
</organism>
<sequence length="802" mass="89865">MEEEGGSSGGAAGTSADGGDGGEQLLTVKHELRTANLTGHAEKVGIENFELLKVLGTGAYGKVFLVRKISGHDTGKLYAMKVLKKATIVQKAKTTEHTRTERQVLEHIRQSPFLVTLHYAFQTETKLHLILDYINGGELFTHLSQRERFTEHEVQIYVGEIVLALEHLHKLGIIYRDIKLENILLDSNGHVVLTDFGLSKEFVADETERAYSFCGTIEYMAPDIVRGGDSGHDKAVDWWSLGVLMYELLTGASPFTVDGEKNSQAEISRRILKSEPPYPQEMSALAKDLIQRLLMKDPKKRLGCGPRDADEIKEHLFFQKINWDDLAAKKVPAPFKPVIRDELDVSNFAEEFTEMDPTYSPAALPQSSEKLFQGYSFVAPSILFKRNAAVIDPLQFHMGVERPGVTNVARSAMMKDSPFYQHYDLDLKDKPLGEGSFSICRKCVHKKSNQAFAVKIISKRMEANTQKEITALKLCEGHPNIVKLHEVFHDQLHTFLVMELLNGGELFERIKKKKHFSETEASYIMRKLVSAVSHMHDVGVVHRDLKPENLLFTDENDNLEIKIIDFGFARLKPPDNQPLKTPCFTLHYAAPELLNQNGYDESCDLWSLGVILYTMLSGQVPFQSHDRSLTCTSAVEIMKKIKKGDFSFEGEAWKNVSQEAKDLIQGLLTVDPNKRLKMSGLRYNEWLQDGSQLSSNPLMTPDILGSSGAAVHTCVKATFHAFNKYKREGFCLQNVDKAPLAKRRKMKKTSTSTETRSSSSESSHSSSSHSHGKTTPTKTLQPSNPADSNNPETLFQFSDSVA</sequence>
<proteinExistence type="evidence at protein level"/>
<evidence type="ECO:0000250" key="1"/>
<evidence type="ECO:0000250" key="2">
    <source>
        <dbReference type="UniProtKB" id="Q8C050"/>
    </source>
</evidence>
<evidence type="ECO:0000255" key="3">
    <source>
        <dbReference type="PROSITE-ProRule" id="PRU00159"/>
    </source>
</evidence>
<evidence type="ECO:0000255" key="4">
    <source>
        <dbReference type="PROSITE-ProRule" id="PRU00618"/>
    </source>
</evidence>
<evidence type="ECO:0000256" key="5">
    <source>
        <dbReference type="SAM" id="MobiDB-lite"/>
    </source>
</evidence>
<evidence type="ECO:0000269" key="6">
    <source>
    </source>
</evidence>
<evidence type="ECO:0000269" key="7">
    <source>
    </source>
</evidence>
<evidence type="ECO:0000269" key="8">
    <source>
    </source>
</evidence>
<evidence type="ECO:0000269" key="9">
    <source>
    </source>
</evidence>
<evidence type="ECO:0000269" key="10">
    <source>
    </source>
</evidence>
<evidence type="ECO:0000269" key="11">
    <source>
    </source>
</evidence>
<evidence type="ECO:0000269" key="12">
    <source>
    </source>
</evidence>
<evidence type="ECO:0000269" key="13">
    <source>
    </source>
</evidence>
<evidence type="ECO:0000269" key="14">
    <source>
    </source>
</evidence>
<evidence type="ECO:0000269" key="15">
    <source>
    </source>
</evidence>
<evidence type="ECO:0000269" key="16">
    <source>
    </source>
</evidence>
<evidence type="ECO:0000269" key="17">
    <source>
    </source>
</evidence>
<evidence type="ECO:0000269" key="18">
    <source>
    </source>
</evidence>
<evidence type="ECO:0000269" key="19">
    <source>
    </source>
</evidence>
<evidence type="ECO:0000303" key="20">
    <source>
    </source>
</evidence>
<evidence type="ECO:0000303" key="21">
    <source>
    </source>
</evidence>
<evidence type="ECO:0000305" key="22"/>
<evidence type="ECO:0000312" key="23">
    <source>
        <dbReference type="EMBL" id="AAC69577.1"/>
    </source>
</evidence>
<evidence type="ECO:0000312" key="24">
    <source>
        <dbReference type="EMBL" id="AAH17187.1"/>
    </source>
</evidence>
<evidence type="ECO:0007744" key="25">
    <source>
    </source>
</evidence>
<evidence type="ECO:0007744" key="26">
    <source>
    </source>
</evidence>
<evidence type="ECO:0007829" key="27">
    <source>
        <dbReference type="PDB" id="1VZO"/>
    </source>
</evidence>
<evidence type="ECO:0007829" key="28">
    <source>
        <dbReference type="PDB" id="3KN6"/>
    </source>
</evidence>
<evidence type="ECO:0007829" key="29">
    <source>
        <dbReference type="PDB" id="7UP4"/>
    </source>
</evidence>
<evidence type="ECO:0007829" key="30">
    <source>
        <dbReference type="PDB" id="7UP6"/>
    </source>
</evidence>
<dbReference type="EC" id="2.7.11.1"/>
<dbReference type="EMBL" id="AF074393">
    <property type="protein sequence ID" value="AAC31171.1"/>
    <property type="molecule type" value="mRNA"/>
</dbReference>
<dbReference type="EMBL" id="AF080000">
    <property type="protein sequence ID" value="AAD23915.1"/>
    <property type="molecule type" value="mRNA"/>
</dbReference>
<dbReference type="EMBL" id="AF090421">
    <property type="protein sequence ID" value="AAC69577.1"/>
    <property type="status" value="ALT_FRAME"/>
    <property type="molecule type" value="mRNA"/>
</dbReference>
<dbReference type="EMBL" id="AK295266">
    <property type="protein sequence ID" value="BAH12021.1"/>
    <property type="molecule type" value="mRNA"/>
</dbReference>
<dbReference type="EMBL" id="AL121784">
    <property type="status" value="NOT_ANNOTATED_CDS"/>
    <property type="molecule type" value="Genomic_DNA"/>
</dbReference>
<dbReference type="EMBL" id="AL133454">
    <property type="status" value="NOT_ANNOTATED_CDS"/>
    <property type="molecule type" value="Genomic_DNA"/>
</dbReference>
<dbReference type="EMBL" id="AL159191">
    <property type="status" value="NOT_ANNOTATED_CDS"/>
    <property type="molecule type" value="Genomic_DNA"/>
</dbReference>
<dbReference type="EMBL" id="BC017187">
    <property type="protein sequence ID" value="AAH17187.1"/>
    <property type="molecule type" value="mRNA"/>
</dbReference>
<dbReference type="CCDS" id="CCDS45149.1">
    <molecule id="O75582-2"/>
</dbReference>
<dbReference type="CCDS" id="CCDS81839.1">
    <molecule id="O75582-3"/>
</dbReference>
<dbReference type="CCDS" id="CCDS9893.1">
    <molecule id="O75582-1"/>
</dbReference>
<dbReference type="PIR" id="T13149">
    <property type="entry name" value="T13149"/>
</dbReference>
<dbReference type="RefSeq" id="NP_001309164.1">
    <molecule id="O75582-3"/>
    <property type="nucleotide sequence ID" value="NM_001322235.2"/>
</dbReference>
<dbReference type="RefSeq" id="NP_001309166.1">
    <molecule id="O75582-3"/>
    <property type="nucleotide sequence ID" value="NM_001322237.2"/>
</dbReference>
<dbReference type="RefSeq" id="NP_004746.2">
    <molecule id="O75582-1"/>
    <property type="nucleotide sequence ID" value="NM_004755.3"/>
</dbReference>
<dbReference type="RefSeq" id="NP_872198.1">
    <molecule id="O75582-2"/>
    <property type="nucleotide sequence ID" value="NM_182398.3"/>
</dbReference>
<dbReference type="PDB" id="1VZO">
    <property type="method" value="X-ray"/>
    <property type="resolution" value="1.80 A"/>
    <property type="chains" value="A=2-348"/>
</dbReference>
<dbReference type="PDB" id="3KN5">
    <property type="method" value="X-ray"/>
    <property type="resolution" value="2.40 A"/>
    <property type="chains" value="A/B=414-738"/>
</dbReference>
<dbReference type="PDB" id="3KN6">
    <property type="method" value="X-ray"/>
    <property type="resolution" value="2.00 A"/>
    <property type="chains" value="A/B=414-738"/>
</dbReference>
<dbReference type="PDB" id="7UP4">
    <property type="method" value="X-ray"/>
    <property type="resolution" value="3.00 A"/>
    <property type="chains" value="A/B=414-738"/>
</dbReference>
<dbReference type="PDB" id="7UP5">
    <property type="method" value="X-ray"/>
    <property type="resolution" value="2.80 A"/>
    <property type="chains" value="A/B=414-738"/>
</dbReference>
<dbReference type="PDB" id="7UP6">
    <property type="method" value="X-ray"/>
    <property type="resolution" value="2.60 A"/>
    <property type="chains" value="A=414-573, A=597-738"/>
</dbReference>
<dbReference type="PDB" id="7UP7">
    <property type="method" value="X-ray"/>
    <property type="resolution" value="2.80 A"/>
    <property type="chains" value="A/B=414-573, A/B=597-738"/>
</dbReference>
<dbReference type="PDB" id="7UP8">
    <property type="method" value="X-ray"/>
    <property type="resolution" value="2.90 A"/>
    <property type="chains" value="A/B=414-738"/>
</dbReference>
<dbReference type="PDBsum" id="1VZO"/>
<dbReference type="PDBsum" id="3KN5"/>
<dbReference type="PDBsum" id="3KN6"/>
<dbReference type="PDBsum" id="7UP4"/>
<dbReference type="PDBsum" id="7UP5"/>
<dbReference type="PDBsum" id="7UP6"/>
<dbReference type="PDBsum" id="7UP7"/>
<dbReference type="PDBsum" id="7UP8"/>
<dbReference type="SMR" id="O75582"/>
<dbReference type="BioGRID" id="114676">
    <property type="interactions" value="146"/>
</dbReference>
<dbReference type="DIP" id="DIP-30894N"/>
<dbReference type="ELM" id="O75582"/>
<dbReference type="FunCoup" id="O75582">
    <property type="interactions" value="4484"/>
</dbReference>
<dbReference type="IntAct" id="O75582">
    <property type="interactions" value="98"/>
</dbReference>
<dbReference type="MINT" id="O75582"/>
<dbReference type="STRING" id="9606.ENSP00000479667"/>
<dbReference type="BindingDB" id="O75582"/>
<dbReference type="ChEMBL" id="CHEMBL4237"/>
<dbReference type="DrugCentral" id="O75582"/>
<dbReference type="GuidetoPHARMACOLOGY" id="1523"/>
<dbReference type="GlyCosmos" id="O75582">
    <property type="glycosylation" value="1 site, 1 glycan"/>
</dbReference>
<dbReference type="GlyGen" id="O75582">
    <property type="glycosylation" value="1 site, 1 O-linked glycan (1 site)"/>
</dbReference>
<dbReference type="iPTMnet" id="O75582"/>
<dbReference type="PhosphoSitePlus" id="O75582"/>
<dbReference type="BioMuta" id="RPS6KA5"/>
<dbReference type="CPTAC" id="CPTAC-3102"/>
<dbReference type="CPTAC" id="CPTAC-3103"/>
<dbReference type="jPOST" id="O75582"/>
<dbReference type="MassIVE" id="O75582"/>
<dbReference type="PaxDb" id="9606-ENSP00000479667"/>
<dbReference type="PeptideAtlas" id="O75582"/>
<dbReference type="ProteomicsDB" id="50098">
    <molecule id="O75582-1"/>
</dbReference>
<dbReference type="ProteomicsDB" id="50099">
    <molecule id="O75582-2"/>
</dbReference>
<dbReference type="ProteomicsDB" id="6477"/>
<dbReference type="Pumba" id="O75582"/>
<dbReference type="Antibodypedia" id="83">
    <property type="antibodies" value="946 antibodies from 42 providers"/>
</dbReference>
<dbReference type="DNASU" id="9252"/>
<dbReference type="Ensembl" id="ENST00000418736.6">
    <molecule id="O75582-2"/>
    <property type="protein sequence ID" value="ENSP00000402787.2"/>
    <property type="gene ID" value="ENSG00000100784.12"/>
</dbReference>
<dbReference type="Ensembl" id="ENST00000536315.6">
    <molecule id="O75582-3"/>
    <property type="protein sequence ID" value="ENSP00000442803.2"/>
    <property type="gene ID" value="ENSG00000100784.12"/>
</dbReference>
<dbReference type="Ensembl" id="ENST00000614987.5">
    <molecule id="O75582-1"/>
    <property type="protein sequence ID" value="ENSP00000479667.1"/>
    <property type="gene ID" value="ENSG00000100784.12"/>
</dbReference>
<dbReference type="GeneID" id="9252"/>
<dbReference type="KEGG" id="hsa:9252"/>
<dbReference type="MANE-Select" id="ENST00000614987.5">
    <property type="protein sequence ID" value="ENSP00000479667.1"/>
    <property type="RefSeq nucleotide sequence ID" value="NM_004755.4"/>
    <property type="RefSeq protein sequence ID" value="NP_004746.2"/>
</dbReference>
<dbReference type="UCSC" id="uc001xys.4">
    <molecule id="O75582-1"/>
    <property type="organism name" value="human"/>
</dbReference>
<dbReference type="UCSC" id="uc010twi.3">
    <property type="organism name" value="human"/>
</dbReference>
<dbReference type="AGR" id="HGNC:10434"/>
<dbReference type="CTD" id="9252"/>
<dbReference type="DisGeNET" id="9252"/>
<dbReference type="GeneCards" id="RPS6KA5"/>
<dbReference type="HGNC" id="HGNC:10434">
    <property type="gene designation" value="RPS6KA5"/>
</dbReference>
<dbReference type="HPA" id="ENSG00000100784">
    <property type="expression patterns" value="Low tissue specificity"/>
</dbReference>
<dbReference type="MIM" id="603607">
    <property type="type" value="gene"/>
</dbReference>
<dbReference type="neXtProt" id="NX_O75582"/>
<dbReference type="OpenTargets" id="ENSG00000100784"/>
<dbReference type="PharmGKB" id="PA34849"/>
<dbReference type="VEuPathDB" id="HostDB:ENSG00000100784"/>
<dbReference type="eggNOG" id="KOG0603">
    <property type="taxonomic scope" value="Eukaryota"/>
</dbReference>
<dbReference type="GeneTree" id="ENSGT00940000156886"/>
<dbReference type="InParanoid" id="O75582"/>
<dbReference type="OMA" id="VEMIYAF"/>
<dbReference type="OrthoDB" id="6764942at2759"/>
<dbReference type="PAN-GO" id="O75582">
    <property type="GO annotations" value="6 GO annotations based on evolutionary models"/>
</dbReference>
<dbReference type="PhylomeDB" id="O75582"/>
<dbReference type="TreeFam" id="TF313438"/>
<dbReference type="PathwayCommons" id="O75582"/>
<dbReference type="Reactome" id="R-HSA-198753">
    <property type="pathway name" value="ERK/MAPK targets"/>
</dbReference>
<dbReference type="Reactome" id="R-HSA-199920">
    <property type="pathway name" value="CREB phosphorylation"/>
</dbReference>
<dbReference type="Reactome" id="R-HSA-375165">
    <property type="pathway name" value="NCAM signaling for neurite out-growth"/>
</dbReference>
<dbReference type="Reactome" id="R-HSA-437239">
    <property type="pathway name" value="Recycling pathway of L1"/>
</dbReference>
<dbReference type="Reactome" id="R-HSA-5621575">
    <property type="pathway name" value="CD209 (DC-SIGN) signaling"/>
</dbReference>
<dbReference type="SABIO-RK" id="O75582"/>
<dbReference type="SignaLink" id="O75582"/>
<dbReference type="SIGNOR" id="O75582"/>
<dbReference type="BioGRID-ORCS" id="9252">
    <property type="hits" value="9 hits in 1187 CRISPR screens"/>
</dbReference>
<dbReference type="ChiTaRS" id="RPS6KA5">
    <property type="organism name" value="human"/>
</dbReference>
<dbReference type="EvolutionaryTrace" id="O75582"/>
<dbReference type="GeneWiki" id="RPS6KA5"/>
<dbReference type="GenomeRNAi" id="9252"/>
<dbReference type="Pharos" id="O75582">
    <property type="development level" value="Tchem"/>
</dbReference>
<dbReference type="PRO" id="PR:O75582"/>
<dbReference type="Proteomes" id="UP000005640">
    <property type="component" value="Chromosome 14"/>
</dbReference>
<dbReference type="RNAct" id="O75582">
    <property type="molecule type" value="protein"/>
</dbReference>
<dbReference type="Bgee" id="ENSG00000100784">
    <property type="expression patterns" value="Expressed in secondary oocyte and 206 other cell types or tissues"/>
</dbReference>
<dbReference type="ExpressionAtlas" id="O75582">
    <property type="expression patterns" value="baseline and differential"/>
</dbReference>
<dbReference type="GO" id="GO:0005737">
    <property type="term" value="C:cytoplasm"/>
    <property type="evidence" value="ECO:0000314"/>
    <property type="project" value="UniProtKB"/>
</dbReference>
<dbReference type="GO" id="GO:0005654">
    <property type="term" value="C:nucleoplasm"/>
    <property type="evidence" value="ECO:0000314"/>
    <property type="project" value="HPA"/>
</dbReference>
<dbReference type="GO" id="GO:0005634">
    <property type="term" value="C:nucleus"/>
    <property type="evidence" value="ECO:0000314"/>
    <property type="project" value="UniProtKB"/>
</dbReference>
<dbReference type="GO" id="GO:0005524">
    <property type="term" value="F:ATP binding"/>
    <property type="evidence" value="ECO:0000314"/>
    <property type="project" value="UniProtKB"/>
</dbReference>
<dbReference type="GO" id="GO:0044024">
    <property type="term" value="F:histone H2AS1 kinase activity"/>
    <property type="evidence" value="ECO:0000314"/>
    <property type="project" value="UniProtKB"/>
</dbReference>
<dbReference type="GO" id="GO:0035175">
    <property type="term" value="F:histone H3S10 kinase activity"/>
    <property type="evidence" value="ECO:0000315"/>
    <property type="project" value="UniProtKB"/>
</dbReference>
<dbReference type="GO" id="GO:0044022">
    <property type="term" value="F:histone H3S28 kinase activity"/>
    <property type="evidence" value="ECO:0000315"/>
    <property type="project" value="UniProtKB"/>
</dbReference>
<dbReference type="GO" id="GO:0000287">
    <property type="term" value="F:magnesium ion binding"/>
    <property type="evidence" value="ECO:0007669"/>
    <property type="project" value="InterPro"/>
</dbReference>
<dbReference type="GO" id="GO:0106310">
    <property type="term" value="F:protein serine kinase activity"/>
    <property type="evidence" value="ECO:0007669"/>
    <property type="project" value="RHEA"/>
</dbReference>
<dbReference type="GO" id="GO:0004674">
    <property type="term" value="F:protein serine/threonine kinase activity"/>
    <property type="evidence" value="ECO:0000314"/>
    <property type="project" value="UniProtKB"/>
</dbReference>
<dbReference type="GO" id="GO:0004713">
    <property type="term" value="F:protein tyrosine kinase activity"/>
    <property type="evidence" value="ECO:0000314"/>
    <property type="project" value="UniProtKB"/>
</dbReference>
<dbReference type="GO" id="GO:0007411">
    <property type="term" value="P:axon guidance"/>
    <property type="evidence" value="ECO:0000304"/>
    <property type="project" value="Reactome"/>
</dbReference>
<dbReference type="GO" id="GO:0006954">
    <property type="term" value="P:inflammatory response"/>
    <property type="evidence" value="ECO:0007669"/>
    <property type="project" value="UniProtKB-KW"/>
</dbReference>
<dbReference type="GO" id="GO:0070498">
    <property type="term" value="P:interleukin-1-mediated signaling pathway"/>
    <property type="evidence" value="ECO:0000315"/>
    <property type="project" value="BHF-UCL"/>
</dbReference>
<dbReference type="GO" id="GO:0035556">
    <property type="term" value="P:intracellular signal transduction"/>
    <property type="evidence" value="ECO:0000314"/>
    <property type="project" value="UniProtKB"/>
</dbReference>
<dbReference type="GO" id="GO:0001818">
    <property type="term" value="P:negative regulation of cytokine production"/>
    <property type="evidence" value="ECO:0000304"/>
    <property type="project" value="UniProtKB"/>
</dbReference>
<dbReference type="GO" id="GO:0045892">
    <property type="term" value="P:negative regulation of DNA-templated transcription"/>
    <property type="evidence" value="ECO:0000314"/>
    <property type="project" value="UniProtKB"/>
</dbReference>
<dbReference type="GO" id="GO:0032793">
    <property type="term" value="P:positive regulation of CREB transcription factor activity"/>
    <property type="evidence" value="ECO:0000304"/>
    <property type="project" value="UniProtKB"/>
</dbReference>
<dbReference type="GO" id="GO:0051092">
    <property type="term" value="P:positive regulation of NF-kappaB transcription factor activity"/>
    <property type="evidence" value="ECO:0000315"/>
    <property type="project" value="UniProtKB"/>
</dbReference>
<dbReference type="GO" id="GO:0045944">
    <property type="term" value="P:positive regulation of transcription by RNA polymerase II"/>
    <property type="evidence" value="ECO:0000315"/>
    <property type="project" value="BHF-UCL"/>
</dbReference>
<dbReference type="GO" id="GO:0043687">
    <property type="term" value="P:post-translational protein modification"/>
    <property type="evidence" value="ECO:0000314"/>
    <property type="project" value="UniProtKB"/>
</dbReference>
<dbReference type="GO" id="GO:0006468">
    <property type="term" value="P:protein phosphorylation"/>
    <property type="evidence" value="ECO:0000314"/>
    <property type="project" value="UniProtKB"/>
</dbReference>
<dbReference type="GO" id="GO:0006355">
    <property type="term" value="P:regulation of DNA-templated transcription"/>
    <property type="evidence" value="ECO:0000314"/>
    <property type="project" value="UniProtKB"/>
</dbReference>
<dbReference type="GO" id="GO:0099175">
    <property type="term" value="P:regulation of postsynapse organization"/>
    <property type="evidence" value="ECO:0007669"/>
    <property type="project" value="Ensembl"/>
</dbReference>
<dbReference type="GO" id="GO:0038202">
    <property type="term" value="P:TORC1 signaling"/>
    <property type="evidence" value="ECO:0000318"/>
    <property type="project" value="GO_Central"/>
</dbReference>
<dbReference type="CDD" id="cd14179">
    <property type="entry name" value="STKc_MSK1_C"/>
    <property type="match status" value="1"/>
</dbReference>
<dbReference type="CDD" id="cd05613">
    <property type="entry name" value="STKc_MSK1_N"/>
    <property type="match status" value="1"/>
</dbReference>
<dbReference type="FunFam" id="3.30.200.20:FF:000648">
    <property type="entry name" value="Non-specific serine/threonine protein kinase"/>
    <property type="match status" value="1"/>
</dbReference>
<dbReference type="FunFam" id="1.10.510.10:FF:000109">
    <property type="entry name" value="Ribosomal protein S6 kinase"/>
    <property type="match status" value="1"/>
</dbReference>
<dbReference type="FunFam" id="1.10.510.10:FF:000157">
    <property type="entry name" value="Ribosomal protein S6 kinase"/>
    <property type="match status" value="1"/>
</dbReference>
<dbReference type="FunFam" id="3.30.200.20:FF:000208">
    <property type="entry name" value="Ribosomal protein S6 kinase"/>
    <property type="match status" value="1"/>
</dbReference>
<dbReference type="FunFam" id="3.30.200.20:FF:000686">
    <property type="entry name" value="Ribosomal protein S6 kinase"/>
    <property type="match status" value="1"/>
</dbReference>
<dbReference type="Gene3D" id="3.30.200.20">
    <property type="entry name" value="Phosphorylase Kinase, domain 1"/>
    <property type="match status" value="2"/>
</dbReference>
<dbReference type="Gene3D" id="1.10.510.10">
    <property type="entry name" value="Transferase(Phosphotransferase) domain 1"/>
    <property type="match status" value="2"/>
</dbReference>
<dbReference type="InterPro" id="IPR000961">
    <property type="entry name" value="AGC-kinase_C"/>
</dbReference>
<dbReference type="InterPro" id="IPR011009">
    <property type="entry name" value="Kinase-like_dom_sf"/>
</dbReference>
<dbReference type="InterPro" id="IPR017892">
    <property type="entry name" value="Pkinase_C"/>
</dbReference>
<dbReference type="InterPro" id="IPR000719">
    <property type="entry name" value="Prot_kinase_dom"/>
</dbReference>
<dbReference type="InterPro" id="IPR017441">
    <property type="entry name" value="Protein_kinase_ATP_BS"/>
</dbReference>
<dbReference type="InterPro" id="IPR016239">
    <property type="entry name" value="Ribosomal_S6_kinase_II"/>
</dbReference>
<dbReference type="InterPro" id="IPR008271">
    <property type="entry name" value="Ser/Thr_kinase_AS"/>
</dbReference>
<dbReference type="PANTHER" id="PTHR24351">
    <property type="entry name" value="RIBOSOMAL PROTEIN S6 KINASE"/>
    <property type="match status" value="1"/>
</dbReference>
<dbReference type="Pfam" id="PF00069">
    <property type="entry name" value="Pkinase"/>
    <property type="match status" value="2"/>
</dbReference>
<dbReference type="Pfam" id="PF00433">
    <property type="entry name" value="Pkinase_C"/>
    <property type="match status" value="1"/>
</dbReference>
<dbReference type="PIRSF" id="PIRSF000606">
    <property type="entry name" value="Ribsml_S6_kin_2"/>
    <property type="match status" value="1"/>
</dbReference>
<dbReference type="SMART" id="SM00133">
    <property type="entry name" value="S_TK_X"/>
    <property type="match status" value="1"/>
</dbReference>
<dbReference type="SMART" id="SM00220">
    <property type="entry name" value="S_TKc"/>
    <property type="match status" value="2"/>
</dbReference>
<dbReference type="SUPFAM" id="SSF56112">
    <property type="entry name" value="Protein kinase-like (PK-like)"/>
    <property type="match status" value="2"/>
</dbReference>
<dbReference type="PROSITE" id="PS51285">
    <property type="entry name" value="AGC_KINASE_CTER"/>
    <property type="match status" value="1"/>
</dbReference>
<dbReference type="PROSITE" id="PS00107">
    <property type="entry name" value="PROTEIN_KINASE_ATP"/>
    <property type="match status" value="2"/>
</dbReference>
<dbReference type="PROSITE" id="PS50011">
    <property type="entry name" value="PROTEIN_KINASE_DOM"/>
    <property type="match status" value="2"/>
</dbReference>
<dbReference type="PROSITE" id="PS00108">
    <property type="entry name" value="PROTEIN_KINASE_ST"/>
    <property type="match status" value="2"/>
</dbReference>
<comment type="function">
    <text evidence="2 6 7 8 9 10 11 15 17 18 19">Serine/threonine-protein kinase that is required for the mitogen or stress-induced phosphorylation of the transcription factors CREB1 and ATF1 and for the regulation of the transcription factors RELA, STAT3 and ETV1/ER81, and that contributes to gene activation by histone phosphorylation and functions in the regulation of inflammatory genes (PubMed:11909979, PubMed:12569367, PubMed:12763138, PubMed:18511904, PubMed:9687510, PubMed:9873047). Phosphorylates CREB1 and ATF1 in response to mitogenic or stress stimuli such as UV-C irradiation, epidermal growth factor (EGF) and anisomycin (PubMed:11909979, PubMed:9873047). Plays an essential role in the control of RELA transcriptional activity in response to TNF and upon glucocorticoid, associates in the cytoplasm with the glucocorticoid receptor NR3C1 and contributes to RELA inhibition and repression of inflammatory gene expression (PubMed:12628924, PubMed:18511904). In skeletal myoblasts is required for phosphorylation of RELA at 'Ser-276' during oxidative stress (PubMed:12628924). In erythropoietin-stimulated cells, is necessary for the 'Ser-727' phosphorylation of STAT3 and regulation of its transcriptional potential (PubMed:12763138). Phosphorylates ETV1/ER81 at 'Ser-191' and 'Ser-216', and thereby regulates its ability to stimulate transcription, which may be important during development and breast tumor formation (PubMed:12569367). Directly represses transcription via phosphorylation of 'Ser-1' of histone H2A (PubMed:15010469). Phosphorylates 'Ser-10' of histone H3 in response to mitogenics, stress stimuli and EGF, which results in the transcriptional activation of several immediate early genes, including proto-oncogenes c-fos/FOS and c-jun/JUN (PubMed:12773393). May also phosphorylate 'Ser-28' of histone H3 (PubMed:12773393). Mediates the mitogen- and stress-induced phosphorylation of high mobility group protein 1 (HMGN1/HMG14) (PubMed:12773393). In lipopolysaccharide-stimulated primary macrophages, acts downstream of the Toll-like receptor TLR4 to limit the production of pro-inflammatory cytokines (By similarity). Functions probably by inducing transcription of the MAP kinase phosphatase DUSP1 and the anti-inflammatory cytokine interleukin 10 (IL10), via CREB1 and ATF1 transcription factors (By similarity). Plays a role in neuronal cell death by mediating the downstream effects of excitotoxic injury (By similarity). Phosphorylates TRIM7 at 'Ser-107' in response to growth factor signaling via the MEK/ERK pathway, thereby stimulating its ubiquitin ligase activity (PubMed:25851810).</text>
</comment>
<comment type="catalytic activity">
    <reaction evidence="8 18 19">
        <text>L-seryl-[protein] + ATP = O-phospho-L-seryl-[protein] + ADP + H(+)</text>
        <dbReference type="Rhea" id="RHEA:17989"/>
        <dbReference type="Rhea" id="RHEA-COMP:9863"/>
        <dbReference type="Rhea" id="RHEA-COMP:11604"/>
        <dbReference type="ChEBI" id="CHEBI:15378"/>
        <dbReference type="ChEBI" id="CHEBI:29999"/>
        <dbReference type="ChEBI" id="CHEBI:30616"/>
        <dbReference type="ChEBI" id="CHEBI:83421"/>
        <dbReference type="ChEBI" id="CHEBI:456216"/>
        <dbReference type="EC" id="2.7.11.1"/>
    </reaction>
</comment>
<comment type="catalytic activity">
    <reaction evidence="8 18 19">
        <text>L-threonyl-[protein] + ATP = O-phospho-L-threonyl-[protein] + ADP + H(+)</text>
        <dbReference type="Rhea" id="RHEA:46608"/>
        <dbReference type="Rhea" id="RHEA-COMP:11060"/>
        <dbReference type="Rhea" id="RHEA-COMP:11605"/>
        <dbReference type="ChEBI" id="CHEBI:15378"/>
        <dbReference type="ChEBI" id="CHEBI:30013"/>
        <dbReference type="ChEBI" id="CHEBI:30616"/>
        <dbReference type="ChEBI" id="CHEBI:61977"/>
        <dbReference type="ChEBI" id="CHEBI:456216"/>
        <dbReference type="EC" id="2.7.11.1"/>
    </reaction>
</comment>
<comment type="cofactor">
    <cofactor evidence="8 18 19">
        <name>Mg(2+)</name>
        <dbReference type="ChEBI" id="CHEBI:18420"/>
    </cofactor>
</comment>
<comment type="activity regulation">
    <text evidence="12 18">Activated by phosphorylation at Ser-360, Thr-581 and Thr-700 by MAPK1/ERK2, MAPK3/ERK1 and MAPK14/p38-alpha, and by further autophosphorylation of Ser-212, Ser-376 and Ser-381 by the activated C-terminal kinase domain. The active N-terminal kinase domain finally phosphorylates downstream substrates, as well as Ser-750, Ser-752 and Ser-758 in its own C-terminal region.</text>
</comment>
<comment type="subunit">
    <text evidence="7 8">Forms a complex with either MAPK1/ERK2 or MAPK3/ERK1 in quiescent cells which transiently dissociates following mitogenic stimulation. Also associates with MAPK14/p38-alpha. Activated RPS6KA5 associates with and phosphorylates the NF-kappa-B p65 subunit RELA. Interacts with CREBBP and EP300.</text>
</comment>
<comment type="interaction">
    <interactant intactId="EBI-73869">
        <id>O75582</id>
    </interactant>
    <interactant intactId="EBI-348169">
        <id>P67870</id>
        <label>CSNK2B</label>
    </interactant>
    <organismsDiffer>false</organismsDiffer>
    <experiments>3</experiments>
</comment>
<comment type="interaction">
    <interactant intactId="EBI-73869">
        <id>O75582</id>
    </interactant>
    <interactant intactId="EBI-11962928">
        <id>Q9UI47-2</id>
        <label>CTNNA3</label>
    </interactant>
    <organismsDiffer>false</organismsDiffer>
    <experiments>3</experiments>
</comment>
<comment type="interaction">
    <interactant intactId="EBI-73869">
        <id>O75582</id>
    </interactant>
    <interactant intactId="EBI-2515339">
        <id>Q9Y4C1</id>
        <label>KDM3A</label>
    </interactant>
    <organismsDiffer>false</organismsDiffer>
    <experiments>3</experiments>
</comment>
<comment type="interaction">
    <interactant intactId="EBI-73869">
        <id>O75582</id>
    </interactant>
    <interactant intactId="EBI-602273">
        <id>Q9NYL2</id>
        <label>MAP3K20</label>
    </interactant>
    <organismsDiffer>false</organismsDiffer>
    <experiments>4</experiments>
</comment>
<comment type="interaction">
    <interactant intactId="EBI-73869">
        <id>O75582</id>
    </interactant>
    <interactant intactId="EBI-73946">
        <id>Q16539</id>
        <label>MAPK14</label>
    </interactant>
    <organismsDiffer>false</organismsDiffer>
    <experiments>3</experiments>
</comment>
<comment type="interaction">
    <interactant intactId="EBI-16135973">
        <id>O75582-1</id>
    </interactant>
    <interactant intactId="EBI-2515339">
        <id>Q9Y4C1</id>
        <label>KDM3A</label>
    </interactant>
    <organismsDiffer>false</organismsDiffer>
    <experiments>3</experiments>
</comment>
<comment type="subcellular location">
    <subcellularLocation>
        <location>Nucleus</location>
    </subcellularLocation>
    <subcellularLocation>
        <location>Cytoplasm</location>
    </subcellularLocation>
    <text>Predominantly nuclear. Exported into cytoplasm in response to glucocorticoid.</text>
</comment>
<comment type="alternative products">
    <event type="alternative splicing"/>
    <isoform>
        <id>O75582-1</id>
        <name>1</name>
        <sequence type="displayed"/>
    </isoform>
    <isoform>
        <id>O75582-2</id>
        <name>2</name>
        <sequence type="described" ref="VSP_041837 VSP_041838"/>
    </isoform>
    <isoform>
        <id>O75582-3</id>
        <name>3</name>
        <sequence type="described" ref="VSP_057410"/>
    </isoform>
</comment>
<comment type="tissue specificity">
    <text evidence="18 19">Widely expressed with high levels in heart, brain and placenta. Less abundant in lung, kidney and liver.</text>
</comment>
<comment type="PTM">
    <text evidence="12 13">Ser-376 and Thr-581 phosphorylation is required for kinase activity. Ser-376 and Ser-212 are autophosphorylated by the C-terminal kinase domain, and their phosphorylation is essential for the catalytic activity of the N-terminal kinase domain. Phosphorylated at Ser-360, Thr-581 and Thr-700 by MAPK1/ERK2, MAPK3/ERK1 and MAPK14/p38-alpha. Autophosphorylated at Ser-750, Ser-752 and Ser-758 by the N-terminal kinase domain.</text>
</comment>
<comment type="PTM">
    <text evidence="16">Ubiquitinated.</text>
</comment>
<comment type="miscellaneous">
    <text evidence="18">Enzyme activity requires the presence of both kinase domains.</text>
</comment>
<comment type="similarity">
    <text evidence="22">Belongs to the protein kinase superfamily. AGC Ser/Thr protein kinase family. S6 kinase subfamily.</text>
</comment>
<comment type="sequence caution" evidence="22">
    <conflict type="frameshift">
        <sequence resource="EMBL-CDS" id="AAC69577"/>
    </conflict>
</comment>
<name>KS6A5_HUMAN</name>